<dbReference type="EC" id="1.14.12.17" evidence="1"/>
<dbReference type="EMBL" id="AE003849">
    <property type="protein sequence ID" value="AAF82866.1"/>
    <property type="molecule type" value="Genomic_DNA"/>
</dbReference>
<dbReference type="PIR" id="A82854">
    <property type="entry name" value="A82854"/>
</dbReference>
<dbReference type="RefSeq" id="WP_010892602.1">
    <property type="nucleotide sequence ID" value="NC_002488.3"/>
</dbReference>
<dbReference type="SMR" id="Q9PH91"/>
<dbReference type="STRING" id="160492.XF_0053"/>
<dbReference type="KEGG" id="xfa:XF_0053"/>
<dbReference type="PATRIC" id="fig|160492.11.peg.60"/>
<dbReference type="eggNOG" id="COG1017">
    <property type="taxonomic scope" value="Bacteria"/>
</dbReference>
<dbReference type="eggNOG" id="COG1018">
    <property type="taxonomic scope" value="Bacteria"/>
</dbReference>
<dbReference type="HOGENOM" id="CLU_003827_12_0_6"/>
<dbReference type="Proteomes" id="UP000000812">
    <property type="component" value="Chromosome"/>
</dbReference>
<dbReference type="GO" id="GO:0071949">
    <property type="term" value="F:FAD binding"/>
    <property type="evidence" value="ECO:0007669"/>
    <property type="project" value="InterPro"/>
</dbReference>
<dbReference type="GO" id="GO:0020037">
    <property type="term" value="F:heme binding"/>
    <property type="evidence" value="ECO:0007669"/>
    <property type="project" value="InterPro"/>
</dbReference>
<dbReference type="GO" id="GO:0046872">
    <property type="term" value="F:metal ion binding"/>
    <property type="evidence" value="ECO:0007669"/>
    <property type="project" value="UniProtKB-KW"/>
</dbReference>
<dbReference type="GO" id="GO:0008941">
    <property type="term" value="F:nitric oxide dioxygenase NAD(P)H activity"/>
    <property type="evidence" value="ECO:0007669"/>
    <property type="project" value="UniProtKB-UniRule"/>
</dbReference>
<dbReference type="GO" id="GO:0019825">
    <property type="term" value="F:oxygen binding"/>
    <property type="evidence" value="ECO:0007669"/>
    <property type="project" value="InterPro"/>
</dbReference>
<dbReference type="GO" id="GO:0005344">
    <property type="term" value="F:oxygen carrier activity"/>
    <property type="evidence" value="ECO:0007669"/>
    <property type="project" value="UniProtKB-UniRule"/>
</dbReference>
<dbReference type="GO" id="GO:0071500">
    <property type="term" value="P:cellular response to nitrosative stress"/>
    <property type="evidence" value="ECO:0007669"/>
    <property type="project" value="TreeGrafter"/>
</dbReference>
<dbReference type="GO" id="GO:0046210">
    <property type="term" value="P:nitric oxide catabolic process"/>
    <property type="evidence" value="ECO:0007669"/>
    <property type="project" value="TreeGrafter"/>
</dbReference>
<dbReference type="GO" id="GO:0009636">
    <property type="term" value="P:response to toxic substance"/>
    <property type="evidence" value="ECO:0007669"/>
    <property type="project" value="UniProtKB-KW"/>
</dbReference>
<dbReference type="CDD" id="cd14781">
    <property type="entry name" value="FHb-globin_1"/>
    <property type="match status" value="1"/>
</dbReference>
<dbReference type="CDD" id="cd06184">
    <property type="entry name" value="flavohem_like_fad_nad_binding"/>
    <property type="match status" value="1"/>
</dbReference>
<dbReference type="FunFam" id="1.10.490.10:FF:000003">
    <property type="entry name" value="Flavohemoprotein"/>
    <property type="match status" value="1"/>
</dbReference>
<dbReference type="FunFam" id="3.40.50.80:FF:000010">
    <property type="entry name" value="Flavohemoprotein"/>
    <property type="match status" value="1"/>
</dbReference>
<dbReference type="Gene3D" id="1.10.490.10">
    <property type="entry name" value="Globins"/>
    <property type="match status" value="1"/>
</dbReference>
<dbReference type="Gene3D" id="3.40.50.80">
    <property type="entry name" value="Nucleotide-binding domain of ferredoxin-NADP reductase (FNR) module"/>
    <property type="match status" value="1"/>
</dbReference>
<dbReference type="Gene3D" id="2.40.30.10">
    <property type="entry name" value="Translation factors"/>
    <property type="match status" value="1"/>
</dbReference>
<dbReference type="HAMAP" id="MF_01252">
    <property type="entry name" value="Hmp"/>
    <property type="match status" value="1"/>
</dbReference>
<dbReference type="InterPro" id="IPR017927">
    <property type="entry name" value="FAD-bd_FR_type"/>
</dbReference>
<dbReference type="InterPro" id="IPR039261">
    <property type="entry name" value="FNR_nucleotide-bd"/>
</dbReference>
<dbReference type="InterPro" id="IPR000971">
    <property type="entry name" value="Globin"/>
</dbReference>
<dbReference type="InterPro" id="IPR009050">
    <property type="entry name" value="Globin-like_sf"/>
</dbReference>
<dbReference type="InterPro" id="IPR012292">
    <property type="entry name" value="Globin/Proto"/>
</dbReference>
<dbReference type="InterPro" id="IPR023950">
    <property type="entry name" value="Hmp"/>
</dbReference>
<dbReference type="InterPro" id="IPR001433">
    <property type="entry name" value="OxRdtase_FAD/NAD-bd"/>
</dbReference>
<dbReference type="InterPro" id="IPR017938">
    <property type="entry name" value="Riboflavin_synthase-like_b-brl"/>
</dbReference>
<dbReference type="NCBIfam" id="NF009805">
    <property type="entry name" value="PRK13289.1"/>
    <property type="match status" value="1"/>
</dbReference>
<dbReference type="PANTHER" id="PTHR43396">
    <property type="entry name" value="FLAVOHEMOPROTEIN"/>
    <property type="match status" value="1"/>
</dbReference>
<dbReference type="PANTHER" id="PTHR43396:SF3">
    <property type="entry name" value="FLAVOHEMOPROTEIN"/>
    <property type="match status" value="1"/>
</dbReference>
<dbReference type="Pfam" id="PF00042">
    <property type="entry name" value="Globin"/>
    <property type="match status" value="1"/>
</dbReference>
<dbReference type="Pfam" id="PF00175">
    <property type="entry name" value="NAD_binding_1"/>
    <property type="match status" value="1"/>
</dbReference>
<dbReference type="PRINTS" id="PR00409">
    <property type="entry name" value="PHDIOXRDTASE"/>
</dbReference>
<dbReference type="SUPFAM" id="SSF52343">
    <property type="entry name" value="Ferredoxin reductase-like, C-terminal NADP-linked domain"/>
    <property type="match status" value="1"/>
</dbReference>
<dbReference type="SUPFAM" id="SSF46458">
    <property type="entry name" value="Globin-like"/>
    <property type="match status" value="1"/>
</dbReference>
<dbReference type="SUPFAM" id="SSF63380">
    <property type="entry name" value="Riboflavin synthase domain-like"/>
    <property type="match status" value="1"/>
</dbReference>
<dbReference type="PROSITE" id="PS51384">
    <property type="entry name" value="FAD_FR"/>
    <property type="match status" value="1"/>
</dbReference>
<dbReference type="PROSITE" id="PS01033">
    <property type="entry name" value="GLOBIN"/>
    <property type="match status" value="1"/>
</dbReference>
<keyword id="KW-0216">Detoxification</keyword>
<keyword id="KW-0274">FAD</keyword>
<keyword id="KW-0285">Flavoprotein</keyword>
<keyword id="KW-0349">Heme</keyword>
<keyword id="KW-0408">Iron</keyword>
<keyword id="KW-0479">Metal-binding</keyword>
<keyword id="KW-0520">NAD</keyword>
<keyword id="KW-0521">NADP</keyword>
<keyword id="KW-0560">Oxidoreductase</keyword>
<keyword id="KW-0561">Oxygen transport</keyword>
<keyword id="KW-0813">Transport</keyword>
<feature type="chain" id="PRO_0000052453" description="Flavohemoprotein">
    <location>
        <begin position="1"/>
        <end position="397"/>
    </location>
</feature>
<feature type="domain" description="Globin" evidence="2">
    <location>
        <begin position="4"/>
        <end position="140"/>
    </location>
</feature>
<feature type="domain" description="FAD-binding FR-type" evidence="1">
    <location>
        <begin position="154"/>
        <end position="258"/>
    </location>
</feature>
<feature type="region of interest" description="Reductase">
    <location>
        <begin position="151"/>
        <end position="397"/>
    </location>
</feature>
<feature type="active site" description="Charge relay system" evidence="1">
    <location>
        <position position="97"/>
    </location>
</feature>
<feature type="active site" description="Charge relay system" evidence="1">
    <location>
        <position position="139"/>
    </location>
</feature>
<feature type="binding site" description="proximal binding residue" evidence="1">
    <location>
        <position position="87"/>
    </location>
    <ligand>
        <name>heme b</name>
        <dbReference type="ChEBI" id="CHEBI:60344"/>
    </ligand>
    <ligandPart>
        <name>Fe</name>
        <dbReference type="ChEBI" id="CHEBI:18248"/>
    </ligandPart>
</feature>
<feature type="binding site" evidence="1">
    <location>
        <position position="192"/>
    </location>
    <ligand>
        <name>FAD</name>
        <dbReference type="ChEBI" id="CHEBI:57692"/>
    </ligand>
</feature>
<feature type="binding site" evidence="1">
    <location>
        <begin position="207"/>
        <end position="210"/>
    </location>
    <ligand>
        <name>FAD</name>
        <dbReference type="ChEBI" id="CHEBI:57692"/>
    </ligand>
</feature>
<feature type="binding site" evidence="1">
    <location>
        <begin position="271"/>
        <end position="276"/>
    </location>
    <ligand>
        <name>NADP(+)</name>
        <dbReference type="ChEBI" id="CHEBI:58349"/>
    </ligand>
</feature>
<feature type="binding site" evidence="1">
    <location>
        <begin position="387"/>
        <end position="390"/>
    </location>
    <ligand>
        <name>FAD</name>
        <dbReference type="ChEBI" id="CHEBI:57692"/>
    </ligand>
</feature>
<feature type="site" description="Involved in heme-bound ligand stabilization and O-O bond activation" evidence="1">
    <location>
        <position position="32"/>
    </location>
</feature>
<feature type="site" description="Influences the redox potential of the prosthetic heme and FAD groups" evidence="1">
    <location>
        <position position="86"/>
    </location>
</feature>
<feature type="site" description="Influences the redox potential of the prosthetic heme and FAD groups" evidence="1">
    <location>
        <position position="386"/>
    </location>
</feature>
<gene>
    <name evidence="1" type="primary">hmp</name>
    <name type="ordered locus">XF_0053</name>
</gene>
<evidence type="ECO:0000255" key="1">
    <source>
        <dbReference type="HAMAP-Rule" id="MF_01252"/>
    </source>
</evidence>
<evidence type="ECO:0000255" key="2">
    <source>
        <dbReference type="PROSITE-ProRule" id="PRU00238"/>
    </source>
</evidence>
<comment type="function">
    <text evidence="1">Is involved in NO detoxification in an aerobic process, termed nitric oxide dioxygenase (NOD) reaction that utilizes O(2) and NAD(P)H to convert NO to nitrate, which protects the bacterium from various noxious nitrogen compounds. Therefore, plays a central role in the inducible response to nitrosative stress.</text>
</comment>
<comment type="catalytic activity">
    <reaction evidence="1">
        <text>2 nitric oxide + NADPH + 2 O2 = 2 nitrate + NADP(+) + H(+)</text>
        <dbReference type="Rhea" id="RHEA:19465"/>
        <dbReference type="ChEBI" id="CHEBI:15378"/>
        <dbReference type="ChEBI" id="CHEBI:15379"/>
        <dbReference type="ChEBI" id="CHEBI:16480"/>
        <dbReference type="ChEBI" id="CHEBI:17632"/>
        <dbReference type="ChEBI" id="CHEBI:57783"/>
        <dbReference type="ChEBI" id="CHEBI:58349"/>
        <dbReference type="EC" id="1.14.12.17"/>
    </reaction>
</comment>
<comment type="catalytic activity">
    <reaction evidence="1">
        <text>2 nitric oxide + NADH + 2 O2 = 2 nitrate + NAD(+) + H(+)</text>
        <dbReference type="Rhea" id="RHEA:19469"/>
        <dbReference type="ChEBI" id="CHEBI:15378"/>
        <dbReference type="ChEBI" id="CHEBI:15379"/>
        <dbReference type="ChEBI" id="CHEBI:16480"/>
        <dbReference type="ChEBI" id="CHEBI:17632"/>
        <dbReference type="ChEBI" id="CHEBI:57540"/>
        <dbReference type="ChEBI" id="CHEBI:57945"/>
        <dbReference type="EC" id="1.14.12.17"/>
    </reaction>
</comment>
<comment type="cofactor">
    <cofactor evidence="1">
        <name>heme b</name>
        <dbReference type="ChEBI" id="CHEBI:60344"/>
    </cofactor>
    <text evidence="1">Binds 1 heme b (iron(II)-protoporphyrin IX) group per subunit.</text>
</comment>
<comment type="cofactor">
    <cofactor evidence="1">
        <name>FAD</name>
        <dbReference type="ChEBI" id="CHEBI:57692"/>
    </cofactor>
    <text evidence="1">Binds 1 FAD per subunit.</text>
</comment>
<comment type="domain">
    <text>Consists of two distinct domains; an N-terminal heme-containing oxygen-binding domain and a C-terminal reductase domain with binding sites for FAD and NAD(P)H.</text>
</comment>
<comment type="similarity">
    <text evidence="1">Belongs to the globin family. Two-domain flavohemoproteins subfamily.</text>
</comment>
<comment type="similarity">
    <text evidence="1">In the C-terminal section; belongs to the flavoprotein pyridine nucleotide cytochrome reductase family.</text>
</comment>
<protein>
    <recommendedName>
        <fullName evidence="1">Flavohemoprotein</fullName>
    </recommendedName>
    <alternativeName>
        <fullName evidence="1">Flavohemoglobin</fullName>
    </alternativeName>
    <alternativeName>
        <fullName evidence="1">Hemoglobin-like protein</fullName>
    </alternativeName>
    <alternativeName>
        <fullName evidence="1">Nitric oxide dioxygenase</fullName>
        <shortName evidence="1">NO oxygenase</shortName>
        <shortName evidence="1">NOD</shortName>
        <ecNumber evidence="1">1.14.12.17</ecNumber>
    </alternativeName>
</protein>
<proteinExistence type="inferred from homology"/>
<name>HMP_XYLFA</name>
<organism>
    <name type="scientific">Xylella fastidiosa (strain 9a5c)</name>
    <dbReference type="NCBI Taxonomy" id="160492"/>
    <lineage>
        <taxon>Bacteria</taxon>
        <taxon>Pseudomonadati</taxon>
        <taxon>Pseudomonadota</taxon>
        <taxon>Gammaproteobacteria</taxon>
        <taxon>Lysobacterales</taxon>
        <taxon>Lysobacteraceae</taxon>
        <taxon>Xylella</taxon>
    </lineage>
</organism>
<sequence length="397" mass="44144">MSASFSPHTITLIKSTVPLLAEHGTTIIEAMYHRLFEDPQIEALFNQANQKNGTQIHALAGAILAYARNIDNPGVLASAIERIAQKHVGYAIHPEHYPHVATALLGAIKKVLGDVATSEVLEAWGEAYWFIANLLKDREAVIREGIMTKNGGWIHWRRFVISKRIPESETITSFMLHPEDGGPVVPHQAGQYLTFRFDAAGMPGMKRNYSISCGPNSDHYRITVKREHGTGASAFLHDQAKVGTIIECTPPVGDFFLPSVIERPIVLLSGGVGLTPMVSMMEQIAEAHPDAQVWYVHGTQNRETHAMDAHIRALVSRHKHMKATTFYTQRREADDAEAGFITIDWLRANTPFQKADFYLCGPRPFLRTFVRDLIGAGVPAVQVHYEFFGPMDEEMAA</sequence>
<reference key="1">
    <citation type="journal article" date="2000" name="Nature">
        <title>The genome sequence of the plant pathogen Xylella fastidiosa.</title>
        <authorList>
            <person name="Simpson A.J.G."/>
            <person name="Reinach F.C."/>
            <person name="Arruda P."/>
            <person name="Abreu F.A."/>
            <person name="Acencio M."/>
            <person name="Alvarenga R."/>
            <person name="Alves L.M.C."/>
            <person name="Araya J.E."/>
            <person name="Baia G.S."/>
            <person name="Baptista C.S."/>
            <person name="Barros M.H."/>
            <person name="Bonaccorsi E.D."/>
            <person name="Bordin S."/>
            <person name="Bove J.M."/>
            <person name="Briones M.R.S."/>
            <person name="Bueno M.R.P."/>
            <person name="Camargo A.A."/>
            <person name="Camargo L.E.A."/>
            <person name="Carraro D.M."/>
            <person name="Carrer H."/>
            <person name="Colauto N.B."/>
            <person name="Colombo C."/>
            <person name="Costa F.F."/>
            <person name="Costa M.C.R."/>
            <person name="Costa-Neto C.M."/>
            <person name="Coutinho L.L."/>
            <person name="Cristofani M."/>
            <person name="Dias-Neto E."/>
            <person name="Docena C."/>
            <person name="El-Dorry H."/>
            <person name="Facincani A.P."/>
            <person name="Ferreira A.J.S."/>
            <person name="Ferreira V.C.A."/>
            <person name="Ferro J.A."/>
            <person name="Fraga J.S."/>
            <person name="Franca S.C."/>
            <person name="Franco M.C."/>
            <person name="Frohme M."/>
            <person name="Furlan L.R."/>
            <person name="Garnier M."/>
            <person name="Goldman G.H."/>
            <person name="Goldman M.H.S."/>
            <person name="Gomes S.L."/>
            <person name="Gruber A."/>
            <person name="Ho P.L."/>
            <person name="Hoheisel J.D."/>
            <person name="Junqueira M.L."/>
            <person name="Kemper E.L."/>
            <person name="Kitajima J.P."/>
            <person name="Krieger J.E."/>
            <person name="Kuramae E.E."/>
            <person name="Laigret F."/>
            <person name="Lambais M.R."/>
            <person name="Leite L.C.C."/>
            <person name="Lemos E.G.M."/>
            <person name="Lemos M.V.F."/>
            <person name="Lopes S.A."/>
            <person name="Lopes C.R."/>
            <person name="Machado J.A."/>
            <person name="Machado M.A."/>
            <person name="Madeira A.M.B.N."/>
            <person name="Madeira H.M.F."/>
            <person name="Marino C.L."/>
            <person name="Marques M.V."/>
            <person name="Martins E.A.L."/>
            <person name="Martins E.M.F."/>
            <person name="Matsukuma A.Y."/>
            <person name="Menck C.F.M."/>
            <person name="Miracca E.C."/>
            <person name="Miyaki C.Y."/>
            <person name="Monteiro-Vitorello C.B."/>
            <person name="Moon D.H."/>
            <person name="Nagai M.A."/>
            <person name="Nascimento A.L.T.O."/>
            <person name="Netto L.E.S."/>
            <person name="Nhani A. Jr."/>
            <person name="Nobrega F.G."/>
            <person name="Nunes L.R."/>
            <person name="Oliveira M.A."/>
            <person name="de Oliveira M.C."/>
            <person name="de Oliveira R.C."/>
            <person name="Palmieri D.A."/>
            <person name="Paris A."/>
            <person name="Peixoto B.R."/>
            <person name="Pereira G.A.G."/>
            <person name="Pereira H.A. Jr."/>
            <person name="Pesquero J.B."/>
            <person name="Quaggio R.B."/>
            <person name="Roberto P.G."/>
            <person name="Rodrigues V."/>
            <person name="de Rosa A.J.M."/>
            <person name="de Rosa V.E. Jr."/>
            <person name="de Sa R.G."/>
            <person name="Santelli R.V."/>
            <person name="Sawasaki H.E."/>
            <person name="da Silva A.C.R."/>
            <person name="da Silva A.M."/>
            <person name="da Silva F.R."/>
            <person name="Silva W.A. Jr."/>
            <person name="da Silveira J.F."/>
            <person name="Silvestri M.L.Z."/>
            <person name="Siqueira W.J."/>
            <person name="de Souza A.A."/>
            <person name="de Souza A.P."/>
            <person name="Terenzi M.F."/>
            <person name="Truffi D."/>
            <person name="Tsai S.M."/>
            <person name="Tsuhako M.H."/>
            <person name="Vallada H."/>
            <person name="Van Sluys M.A."/>
            <person name="Verjovski-Almeida S."/>
            <person name="Vettore A.L."/>
            <person name="Zago M.A."/>
            <person name="Zatz M."/>
            <person name="Meidanis J."/>
            <person name="Setubal J.C."/>
        </authorList>
    </citation>
    <scope>NUCLEOTIDE SEQUENCE [LARGE SCALE GENOMIC DNA]</scope>
    <source>
        <strain>9a5c</strain>
    </source>
</reference>
<accession>Q9PH91</accession>